<evidence type="ECO:0000250" key="1"/>
<evidence type="ECO:0000250" key="2">
    <source>
        <dbReference type="UniProtKB" id="P00157"/>
    </source>
</evidence>
<evidence type="ECO:0000255" key="3">
    <source>
        <dbReference type="PROSITE-ProRule" id="PRU00967"/>
    </source>
</evidence>
<evidence type="ECO:0000255" key="4">
    <source>
        <dbReference type="PROSITE-ProRule" id="PRU00968"/>
    </source>
</evidence>
<keyword id="KW-0249">Electron transport</keyword>
<keyword id="KW-0349">Heme</keyword>
<keyword id="KW-0408">Iron</keyword>
<keyword id="KW-0472">Membrane</keyword>
<keyword id="KW-0479">Metal-binding</keyword>
<keyword id="KW-0496">Mitochondrion</keyword>
<keyword id="KW-0999">Mitochondrion inner membrane</keyword>
<keyword id="KW-0679">Respiratory chain</keyword>
<keyword id="KW-0812">Transmembrane</keyword>
<keyword id="KW-1133">Transmembrane helix</keyword>
<keyword id="KW-0813">Transport</keyword>
<keyword id="KW-0830">Ubiquinone</keyword>
<geneLocation type="mitochondrion"/>
<organism>
    <name type="scientific">Cebus albifrons</name>
    <name type="common">White-fronted capuchin</name>
    <dbReference type="NCBI Taxonomy" id="9514"/>
    <lineage>
        <taxon>Eukaryota</taxon>
        <taxon>Metazoa</taxon>
        <taxon>Chordata</taxon>
        <taxon>Craniata</taxon>
        <taxon>Vertebrata</taxon>
        <taxon>Euteleostomi</taxon>
        <taxon>Mammalia</taxon>
        <taxon>Eutheria</taxon>
        <taxon>Euarchontoglires</taxon>
        <taxon>Primates</taxon>
        <taxon>Haplorrhini</taxon>
        <taxon>Platyrrhini</taxon>
        <taxon>Cebidae</taxon>
        <taxon>Cebinae</taxon>
        <taxon>Cebus</taxon>
    </lineage>
</organism>
<name>CYB_CEBAL</name>
<comment type="function">
    <text evidence="2">Component of the ubiquinol-cytochrome c reductase complex (complex III or cytochrome b-c1 complex) that is part of the mitochondrial respiratory chain. The b-c1 complex mediates electron transfer from ubiquinol to cytochrome c. Contributes to the generation of a proton gradient across the mitochondrial membrane that is then used for ATP synthesis.</text>
</comment>
<comment type="cofactor">
    <cofactor evidence="2">
        <name>heme b</name>
        <dbReference type="ChEBI" id="CHEBI:60344"/>
    </cofactor>
    <text evidence="2">Binds 2 heme b groups non-covalently.</text>
</comment>
<comment type="subunit">
    <text evidence="2">The cytochrome bc1 complex contains 11 subunits: 3 respiratory subunits (MT-CYB, CYC1 and UQCRFS1), 2 core proteins (UQCRC1 and UQCRC2) and 6 low-molecular weight proteins (UQCRH/QCR6, UQCRB/QCR7, UQCRQ/QCR8, UQCR10/QCR9, UQCR11/QCR10 and a cleavage product of UQCRFS1). This cytochrome bc1 complex then forms a dimer.</text>
</comment>
<comment type="subcellular location">
    <subcellularLocation>
        <location evidence="2">Mitochondrion inner membrane</location>
        <topology evidence="2">Multi-pass membrane protein</topology>
    </subcellularLocation>
</comment>
<comment type="miscellaneous">
    <text evidence="1">Heme 1 (or BL or b562) is low-potential and absorbs at about 562 nm, and heme 2 (or BH or b566) is high-potential and absorbs at about 566 nm.</text>
</comment>
<comment type="similarity">
    <text evidence="3 4">Belongs to the cytochrome b family.</text>
</comment>
<comment type="caution">
    <text evidence="2">The full-length protein contains only eight transmembrane helices, not nine as predicted by bioinformatics tools.</text>
</comment>
<reference key="1">
    <citation type="journal article" date="2000" name="Hereditas">
        <title>Molecular estimates of primate divergences and new hypotheses for primate dispersal and the origin of modern humans.</title>
        <authorList>
            <person name="Arnason U."/>
            <person name="Gullberg A."/>
            <person name="Burguete A.S."/>
            <person name="Janke A."/>
        </authorList>
    </citation>
    <scope>NUCLEOTIDE SEQUENCE [GENOMIC DNA]</scope>
</reference>
<dbReference type="EMBL" id="AJ309866">
    <property type="protein sequence ID" value="CAC37918.1"/>
    <property type="molecule type" value="Genomic_DNA"/>
</dbReference>
<dbReference type="RefSeq" id="NP_114333.1">
    <property type="nucleotide sequence ID" value="NC_002763.1"/>
</dbReference>
<dbReference type="SMR" id="Q94ZK8"/>
<dbReference type="GeneID" id="803066"/>
<dbReference type="CTD" id="4519"/>
<dbReference type="GO" id="GO:0005743">
    <property type="term" value="C:mitochondrial inner membrane"/>
    <property type="evidence" value="ECO:0007669"/>
    <property type="project" value="UniProtKB-SubCell"/>
</dbReference>
<dbReference type="GO" id="GO:0045275">
    <property type="term" value="C:respiratory chain complex III"/>
    <property type="evidence" value="ECO:0007669"/>
    <property type="project" value="InterPro"/>
</dbReference>
<dbReference type="GO" id="GO:0046872">
    <property type="term" value="F:metal ion binding"/>
    <property type="evidence" value="ECO:0007669"/>
    <property type="project" value="UniProtKB-KW"/>
</dbReference>
<dbReference type="GO" id="GO:0008121">
    <property type="term" value="F:ubiquinol-cytochrome-c reductase activity"/>
    <property type="evidence" value="ECO:0007669"/>
    <property type="project" value="InterPro"/>
</dbReference>
<dbReference type="GO" id="GO:0006122">
    <property type="term" value="P:mitochondrial electron transport, ubiquinol to cytochrome c"/>
    <property type="evidence" value="ECO:0007669"/>
    <property type="project" value="TreeGrafter"/>
</dbReference>
<dbReference type="CDD" id="cd00290">
    <property type="entry name" value="cytochrome_b_C"/>
    <property type="match status" value="1"/>
</dbReference>
<dbReference type="CDD" id="cd00284">
    <property type="entry name" value="Cytochrome_b_N"/>
    <property type="match status" value="1"/>
</dbReference>
<dbReference type="FunFam" id="1.20.810.10:FF:000002">
    <property type="entry name" value="Cytochrome b"/>
    <property type="match status" value="1"/>
</dbReference>
<dbReference type="Gene3D" id="1.20.810.10">
    <property type="entry name" value="Cytochrome Bc1 Complex, Chain C"/>
    <property type="match status" value="1"/>
</dbReference>
<dbReference type="InterPro" id="IPR005798">
    <property type="entry name" value="Cyt_b/b6_C"/>
</dbReference>
<dbReference type="InterPro" id="IPR036150">
    <property type="entry name" value="Cyt_b/b6_C_sf"/>
</dbReference>
<dbReference type="InterPro" id="IPR005797">
    <property type="entry name" value="Cyt_b/b6_N"/>
</dbReference>
<dbReference type="InterPro" id="IPR027387">
    <property type="entry name" value="Cytb/b6-like_sf"/>
</dbReference>
<dbReference type="InterPro" id="IPR030689">
    <property type="entry name" value="Cytochrome_b"/>
</dbReference>
<dbReference type="InterPro" id="IPR048260">
    <property type="entry name" value="Cytochrome_b_C_euk/bac"/>
</dbReference>
<dbReference type="InterPro" id="IPR048259">
    <property type="entry name" value="Cytochrome_b_N_euk/bac"/>
</dbReference>
<dbReference type="InterPro" id="IPR016174">
    <property type="entry name" value="Di-haem_cyt_TM"/>
</dbReference>
<dbReference type="PANTHER" id="PTHR19271">
    <property type="entry name" value="CYTOCHROME B"/>
    <property type="match status" value="1"/>
</dbReference>
<dbReference type="PANTHER" id="PTHR19271:SF16">
    <property type="entry name" value="CYTOCHROME B"/>
    <property type="match status" value="1"/>
</dbReference>
<dbReference type="Pfam" id="PF00032">
    <property type="entry name" value="Cytochrom_B_C"/>
    <property type="match status" value="1"/>
</dbReference>
<dbReference type="Pfam" id="PF00033">
    <property type="entry name" value="Cytochrome_B"/>
    <property type="match status" value="1"/>
</dbReference>
<dbReference type="PIRSF" id="PIRSF038885">
    <property type="entry name" value="COB"/>
    <property type="match status" value="1"/>
</dbReference>
<dbReference type="SUPFAM" id="SSF81648">
    <property type="entry name" value="a domain/subunit of cytochrome bc1 complex (Ubiquinol-cytochrome c reductase)"/>
    <property type="match status" value="1"/>
</dbReference>
<dbReference type="SUPFAM" id="SSF81342">
    <property type="entry name" value="Transmembrane di-heme cytochromes"/>
    <property type="match status" value="1"/>
</dbReference>
<dbReference type="PROSITE" id="PS51003">
    <property type="entry name" value="CYTB_CTER"/>
    <property type="match status" value="1"/>
</dbReference>
<dbReference type="PROSITE" id="PS51002">
    <property type="entry name" value="CYTB_NTER"/>
    <property type="match status" value="1"/>
</dbReference>
<protein>
    <recommendedName>
        <fullName>Cytochrome b</fullName>
    </recommendedName>
    <alternativeName>
        <fullName>Complex III subunit 3</fullName>
    </alternativeName>
    <alternativeName>
        <fullName>Complex III subunit III</fullName>
    </alternativeName>
    <alternativeName>
        <fullName>Cytochrome b-c1 complex subunit 3</fullName>
    </alternativeName>
    <alternativeName>
        <fullName>Ubiquinol-cytochrome-c reductase complex cytochrome b subunit</fullName>
    </alternativeName>
</protein>
<accession>Q94ZK8</accession>
<sequence>MTSPRKTHPLMKIINSSFIDLPTPSNISSWWNFGSLLGACLMIQITTGLFLAMHYTPDTSTAFSSVAHITRDINYGWMIRLLHANGASMFFVCLFLHTGRGLYYGSFLFLNTWNIGTILLLMTMATAFMGYVLPWGQMSFWGATVITNLLSAIPYTGHNLVQWIWGGFSVDKPTLTRFFTFHFILPFIITALATIHLLFLHETGSNNPSGMASSPDKIMFHPYYTTKDIFGLTLLLLLLTSLTLFTPDLLTDPDNYTLANPLNTPPHIKPEWYFLFAYTILRSIPNKLGGVLALLLSIMILTIIPATHLSKQQSMMFRPITQILFWTLAADLLTLTWIGGQPVEYPFEAIGQTASIAYFLIITLIPLSALTENKLLKW</sequence>
<feature type="chain" id="PRO_0000060742" description="Cytochrome b">
    <location>
        <begin position="1"/>
        <end position="378"/>
    </location>
</feature>
<feature type="transmembrane region" description="Helical" evidence="2">
    <location>
        <begin position="33"/>
        <end position="53"/>
    </location>
</feature>
<feature type="transmembrane region" description="Helical" evidence="2">
    <location>
        <begin position="77"/>
        <end position="98"/>
    </location>
</feature>
<feature type="transmembrane region" description="Helical" evidence="2">
    <location>
        <begin position="113"/>
        <end position="133"/>
    </location>
</feature>
<feature type="transmembrane region" description="Helical" evidence="2">
    <location>
        <begin position="178"/>
        <end position="198"/>
    </location>
</feature>
<feature type="transmembrane region" description="Helical" evidence="2">
    <location>
        <begin position="226"/>
        <end position="246"/>
    </location>
</feature>
<feature type="transmembrane region" description="Helical" evidence="2">
    <location>
        <begin position="288"/>
        <end position="308"/>
    </location>
</feature>
<feature type="transmembrane region" description="Helical" evidence="2">
    <location>
        <begin position="320"/>
        <end position="340"/>
    </location>
</feature>
<feature type="transmembrane region" description="Helical" evidence="2">
    <location>
        <begin position="347"/>
        <end position="366"/>
    </location>
</feature>
<feature type="binding site" description="axial binding residue" evidence="2">
    <location>
        <position position="83"/>
    </location>
    <ligand>
        <name>heme b</name>
        <dbReference type="ChEBI" id="CHEBI:60344"/>
        <label>b562</label>
    </ligand>
    <ligandPart>
        <name>Fe</name>
        <dbReference type="ChEBI" id="CHEBI:18248"/>
    </ligandPart>
</feature>
<feature type="binding site" description="axial binding residue" evidence="2">
    <location>
        <position position="97"/>
    </location>
    <ligand>
        <name>heme b</name>
        <dbReference type="ChEBI" id="CHEBI:60344"/>
        <label>b566</label>
    </ligand>
    <ligandPart>
        <name>Fe</name>
        <dbReference type="ChEBI" id="CHEBI:18248"/>
    </ligandPart>
</feature>
<feature type="binding site" description="axial binding residue" evidence="2">
    <location>
        <position position="182"/>
    </location>
    <ligand>
        <name>heme b</name>
        <dbReference type="ChEBI" id="CHEBI:60344"/>
        <label>b562</label>
    </ligand>
    <ligandPart>
        <name>Fe</name>
        <dbReference type="ChEBI" id="CHEBI:18248"/>
    </ligandPart>
</feature>
<feature type="binding site" description="axial binding residue" evidence="2">
    <location>
        <position position="196"/>
    </location>
    <ligand>
        <name>heme b</name>
        <dbReference type="ChEBI" id="CHEBI:60344"/>
        <label>b566</label>
    </ligand>
    <ligandPart>
        <name>Fe</name>
        <dbReference type="ChEBI" id="CHEBI:18248"/>
    </ligandPart>
</feature>
<feature type="binding site" evidence="2">
    <location>
        <position position="201"/>
    </location>
    <ligand>
        <name>a ubiquinone</name>
        <dbReference type="ChEBI" id="CHEBI:16389"/>
    </ligand>
</feature>
<proteinExistence type="inferred from homology"/>
<gene>
    <name type="primary">MT-CYB</name>
    <name type="synonym">COB</name>
    <name type="synonym">CYTB</name>
    <name type="synonym">MTCYB</name>
</gene>